<reference key="1">
    <citation type="journal article" date="1995" name="Theor. Appl. Genet.">
        <title>Mapping of a chloroplast RFLP marker associated with the CMS cytoplasm of sugar beet (Beta vulgaris).</title>
        <authorList>
            <person name="Ran Z."/>
            <person name="Michaelis G."/>
        </authorList>
    </citation>
    <scope>NUCLEOTIDE SEQUENCE [GENOMIC DNA]</scope>
    <source>
        <strain>cv. Altissima</strain>
        <tissue>Leaf</tissue>
    </source>
</reference>
<reference key="2">
    <citation type="journal article" date="1995" name="Curr. Genet.">
        <title>The chloroplast trnP-trnW-petG gene cluster in the mitochondrial genomes of Beta vulgaris, B. trigyna and B. webbiana: evolutionary aspects.</title>
        <authorList>
            <person name="Kubo T."/>
            <person name="Yanai Y."/>
            <person name="Kinoshita T."/>
            <person name="Mikami T."/>
        </authorList>
    </citation>
    <scope>NUCLEOTIDE SEQUENCE [GENOMIC DNA]</scope>
    <source>
        <strain>cv. TK81-O</strain>
        <tissue>Leaf</tissue>
    </source>
</reference>
<sequence>MIEVFLFGIVLGLIPITLAGLFVTAYLQYRRGDQLDL</sequence>
<proteinExistence type="inferred from homology"/>
<protein>
    <recommendedName>
        <fullName evidence="1">Cytochrome b6-f complex subunit 5</fullName>
    </recommendedName>
    <alternativeName>
        <fullName evidence="1">Cytochrome b6-f complex subunit PetG</fullName>
    </alternativeName>
    <alternativeName>
        <fullName evidence="1">Cytochrome b6-f complex subunit V</fullName>
    </alternativeName>
</protein>
<gene>
    <name evidence="1" type="primary">petG</name>
</gene>
<accession>P69454</accession>
<accession>P12121</accession>
<accession>P32973</accession>
<evidence type="ECO:0000255" key="1">
    <source>
        <dbReference type="HAMAP-Rule" id="MF_00432"/>
    </source>
</evidence>
<keyword id="KW-0150">Chloroplast</keyword>
<keyword id="KW-0249">Electron transport</keyword>
<keyword id="KW-0472">Membrane</keyword>
<keyword id="KW-0602">Photosynthesis</keyword>
<keyword id="KW-0934">Plastid</keyword>
<keyword id="KW-0793">Thylakoid</keyword>
<keyword id="KW-0812">Transmembrane</keyword>
<keyword id="KW-1133">Transmembrane helix</keyword>
<keyword id="KW-0813">Transport</keyword>
<name>PETG_BETVU</name>
<organism>
    <name type="scientific">Beta vulgaris</name>
    <name type="common">Sugar beet</name>
    <dbReference type="NCBI Taxonomy" id="161934"/>
    <lineage>
        <taxon>Eukaryota</taxon>
        <taxon>Viridiplantae</taxon>
        <taxon>Streptophyta</taxon>
        <taxon>Embryophyta</taxon>
        <taxon>Tracheophyta</taxon>
        <taxon>Spermatophyta</taxon>
        <taxon>Magnoliopsida</taxon>
        <taxon>eudicotyledons</taxon>
        <taxon>Gunneridae</taxon>
        <taxon>Pentapetalae</taxon>
        <taxon>Caryophyllales</taxon>
        <taxon>Chenopodiaceae</taxon>
        <taxon>Betoideae</taxon>
        <taxon>Beta</taxon>
    </lineage>
</organism>
<geneLocation type="chloroplast"/>
<dbReference type="EMBL" id="X87636">
    <property type="protein sequence ID" value="CAA60964.1"/>
    <property type="molecule type" value="Genomic_DNA"/>
</dbReference>
<dbReference type="EMBL" id="X87637">
    <property type="protein sequence ID" value="CAA60969.1"/>
    <property type="molecule type" value="Genomic_DNA"/>
</dbReference>
<dbReference type="EMBL" id="D38019">
    <property type="protein sequence ID" value="BAA07216.1"/>
    <property type="molecule type" value="Genomic_DNA"/>
</dbReference>
<dbReference type="PIR" id="S68166">
    <property type="entry name" value="S68166"/>
</dbReference>
<dbReference type="SMR" id="P69454"/>
<dbReference type="GO" id="GO:0009535">
    <property type="term" value="C:chloroplast thylakoid membrane"/>
    <property type="evidence" value="ECO:0007669"/>
    <property type="project" value="UniProtKB-SubCell"/>
</dbReference>
<dbReference type="GO" id="GO:0009512">
    <property type="term" value="C:cytochrome b6f complex"/>
    <property type="evidence" value="ECO:0007669"/>
    <property type="project" value="InterPro"/>
</dbReference>
<dbReference type="GO" id="GO:0045158">
    <property type="term" value="F:electron transporter, transferring electrons within cytochrome b6/f complex of photosystem II activity"/>
    <property type="evidence" value="ECO:0007669"/>
    <property type="project" value="UniProtKB-UniRule"/>
</dbReference>
<dbReference type="GO" id="GO:0017004">
    <property type="term" value="P:cytochrome complex assembly"/>
    <property type="evidence" value="ECO:0007669"/>
    <property type="project" value="UniProtKB-UniRule"/>
</dbReference>
<dbReference type="GO" id="GO:0015979">
    <property type="term" value="P:photosynthesis"/>
    <property type="evidence" value="ECO:0007669"/>
    <property type="project" value="UniProtKB-KW"/>
</dbReference>
<dbReference type="HAMAP" id="MF_00432">
    <property type="entry name" value="Cytb6_f_PetG"/>
    <property type="match status" value="1"/>
</dbReference>
<dbReference type="InterPro" id="IPR003683">
    <property type="entry name" value="Cyt_6/f_cplx_su5"/>
</dbReference>
<dbReference type="InterPro" id="IPR036099">
    <property type="entry name" value="Cyt_6/f_cplx_su5_sf"/>
</dbReference>
<dbReference type="NCBIfam" id="NF001907">
    <property type="entry name" value="PRK00665.1"/>
    <property type="match status" value="1"/>
</dbReference>
<dbReference type="Pfam" id="PF02529">
    <property type="entry name" value="PetG"/>
    <property type="match status" value="1"/>
</dbReference>
<dbReference type="PIRSF" id="PIRSF000034">
    <property type="entry name" value="Cyt_b6-f_V"/>
    <property type="match status" value="1"/>
</dbReference>
<dbReference type="SUPFAM" id="SSF103446">
    <property type="entry name" value="PetG subunit of the cytochrome b6f complex"/>
    <property type="match status" value="1"/>
</dbReference>
<feature type="chain" id="PRO_0000216371" description="Cytochrome b6-f complex subunit 5">
    <location>
        <begin position="1"/>
        <end position="37"/>
    </location>
</feature>
<feature type="transmembrane region" description="Helical" evidence="1">
    <location>
        <begin position="5"/>
        <end position="25"/>
    </location>
</feature>
<comment type="function">
    <text evidence="1">Component of the cytochrome b6-f complex, which mediates electron transfer between photosystem II (PSII) and photosystem I (PSI), cyclic electron flow around PSI, and state transitions. PetG is required for either the stability or assembly of the cytochrome b6-f complex.</text>
</comment>
<comment type="subunit">
    <text evidence="1">The 4 large subunits of the cytochrome b6-f complex are cytochrome b6, subunit IV (17 kDa polypeptide, PetD), cytochrome f and the Rieske protein, while the 4 small subunits are PetG, PetL, PetM and PetN. The complex functions as a dimer.</text>
</comment>
<comment type="subcellular location">
    <subcellularLocation>
        <location evidence="1">Plastid</location>
        <location evidence="1">Chloroplast thylakoid membrane</location>
        <topology evidence="1">Single-pass membrane protein</topology>
    </subcellularLocation>
</comment>
<comment type="similarity">
    <text evidence="1">Belongs to the PetG family.</text>
</comment>